<protein>
    <recommendedName>
        <fullName evidence="1">3-octaprenyl-4-hydroxybenzoate carboxy-lyase</fullName>
        <ecNumber evidence="1">4.1.1.98</ecNumber>
    </recommendedName>
    <alternativeName>
        <fullName evidence="1">Polyprenyl p-hydroxybenzoate decarboxylase</fullName>
    </alternativeName>
</protein>
<sequence length="488" mass="54766">MQYRDLRDFIRGLEQRGELKRIQVPISPVLEMTEVCDRTLRAKGPALLFEKPTGFDIPVLGNLFGTPERVAMGMGAESVSELREIGKLLAFLKEPEPPKGLKDAWSKLPIFKKVVSMAPKVVKDAVCQEVVVEGDDVDLGTLPIQHCWPGDVAPLITWGLTVTRGPNKDRQNLGIYRQQVIGRNKVIMRWLSHRGGALDYREWCEKNPGQPFPVAVALGADPATILGAVTPVPDTLSEYAFAGLLRGNRTELVKCRGSNLQVPATAEIILEGVIHPGEMAPEGPYGDHTGYYNEVDSFPVFTVERITHRQKPIYHSTYTGRPPDEPAILGVALNEVFVPILQKQFPEITDFYLPPEGCSYRMAVVTMKKQYPGHAKRVMLGVWSFLRQFMYTKFVIVTDDDINARDWNDVIWAITTRMDPKRDTVMIDNTPIDYLDFASPVSGLGSKMGLDATHKWPGETTREWGRVIVKDEAVTRRIDELWDQLGID</sequence>
<reference key="1">
    <citation type="journal article" date="2002" name="Environ. Microbiol.">
        <title>Complete genome sequence and comparative analysis of the metabolically versatile Pseudomonas putida KT2440.</title>
        <authorList>
            <person name="Nelson K.E."/>
            <person name="Weinel C."/>
            <person name="Paulsen I.T."/>
            <person name="Dodson R.J."/>
            <person name="Hilbert H."/>
            <person name="Martins dos Santos V.A.P."/>
            <person name="Fouts D.E."/>
            <person name="Gill S.R."/>
            <person name="Pop M."/>
            <person name="Holmes M."/>
            <person name="Brinkac L.M."/>
            <person name="Beanan M.J."/>
            <person name="DeBoy R.T."/>
            <person name="Daugherty S.C."/>
            <person name="Kolonay J.F."/>
            <person name="Madupu R."/>
            <person name="Nelson W.C."/>
            <person name="White O."/>
            <person name="Peterson J.D."/>
            <person name="Khouri H.M."/>
            <person name="Hance I."/>
            <person name="Chris Lee P."/>
            <person name="Holtzapple E.K."/>
            <person name="Scanlan D."/>
            <person name="Tran K."/>
            <person name="Moazzez A."/>
            <person name="Utterback T.R."/>
            <person name="Rizzo M."/>
            <person name="Lee K."/>
            <person name="Kosack D."/>
            <person name="Moestl D."/>
            <person name="Wedler H."/>
            <person name="Lauber J."/>
            <person name="Stjepandic D."/>
            <person name="Hoheisel J."/>
            <person name="Straetz M."/>
            <person name="Heim S."/>
            <person name="Kiewitz C."/>
            <person name="Eisen J.A."/>
            <person name="Timmis K.N."/>
            <person name="Duesterhoeft A."/>
            <person name="Tuemmler B."/>
            <person name="Fraser C.M."/>
        </authorList>
    </citation>
    <scope>NUCLEOTIDE SEQUENCE [LARGE SCALE GENOMIC DNA]</scope>
    <source>
        <strain>ATCC 47054 / DSM 6125 / CFBP 8728 / NCIMB 11950 / KT2440</strain>
    </source>
</reference>
<keyword id="KW-1003">Cell membrane</keyword>
<keyword id="KW-0210">Decarboxylase</keyword>
<keyword id="KW-0285">Flavoprotein</keyword>
<keyword id="KW-0288">FMN</keyword>
<keyword id="KW-0456">Lyase</keyword>
<keyword id="KW-0464">Manganese</keyword>
<keyword id="KW-0472">Membrane</keyword>
<keyword id="KW-0479">Metal-binding</keyword>
<keyword id="KW-1185">Reference proteome</keyword>
<keyword id="KW-0831">Ubiquinone biosynthesis</keyword>
<dbReference type="EC" id="4.1.1.98" evidence="1"/>
<dbReference type="EMBL" id="AE015451">
    <property type="protein sequence ID" value="AAN70778.1"/>
    <property type="status" value="ALT_INIT"/>
    <property type="molecule type" value="Genomic_DNA"/>
</dbReference>
<dbReference type="RefSeq" id="NP_747314.2">
    <property type="nucleotide sequence ID" value="NC_002947.4"/>
</dbReference>
<dbReference type="RefSeq" id="WP_003253663.1">
    <property type="nucleotide sequence ID" value="NZ_CP169744.1"/>
</dbReference>
<dbReference type="SMR" id="Q88CG8"/>
<dbReference type="STRING" id="160488.PP_5213"/>
<dbReference type="PaxDb" id="160488-PP_5213"/>
<dbReference type="GeneID" id="83682954"/>
<dbReference type="KEGG" id="ppu:PP_5213"/>
<dbReference type="PATRIC" id="fig|160488.4.peg.5562"/>
<dbReference type="eggNOG" id="COG0043">
    <property type="taxonomic scope" value="Bacteria"/>
</dbReference>
<dbReference type="HOGENOM" id="CLU_023348_4_1_6"/>
<dbReference type="OrthoDB" id="9809841at2"/>
<dbReference type="PhylomeDB" id="Q88CG8"/>
<dbReference type="BioCyc" id="PPUT160488:G1G01-5562-MONOMER"/>
<dbReference type="UniPathway" id="UPA00232"/>
<dbReference type="Proteomes" id="UP000000556">
    <property type="component" value="Chromosome"/>
</dbReference>
<dbReference type="GO" id="GO:0005829">
    <property type="term" value="C:cytosol"/>
    <property type="evidence" value="ECO:0007669"/>
    <property type="project" value="TreeGrafter"/>
</dbReference>
<dbReference type="GO" id="GO:0005886">
    <property type="term" value="C:plasma membrane"/>
    <property type="evidence" value="ECO:0007669"/>
    <property type="project" value="UniProtKB-SubCell"/>
</dbReference>
<dbReference type="GO" id="GO:0008694">
    <property type="term" value="F:3-octaprenyl-4-hydroxybenzoate carboxy-lyase activity"/>
    <property type="evidence" value="ECO:0007669"/>
    <property type="project" value="UniProtKB-UniRule"/>
</dbReference>
<dbReference type="GO" id="GO:0046872">
    <property type="term" value="F:metal ion binding"/>
    <property type="evidence" value="ECO:0007669"/>
    <property type="project" value="UniProtKB-KW"/>
</dbReference>
<dbReference type="GO" id="GO:0006744">
    <property type="term" value="P:ubiquinone biosynthetic process"/>
    <property type="evidence" value="ECO:0007669"/>
    <property type="project" value="UniProtKB-UniRule"/>
</dbReference>
<dbReference type="FunFam" id="1.20.5.570:FF:000001">
    <property type="entry name" value="3-octaprenyl-4-hydroxybenzoate carboxy-lyase"/>
    <property type="match status" value="1"/>
</dbReference>
<dbReference type="FunFam" id="3.40.1670.10:FF:000001">
    <property type="entry name" value="3-octaprenyl-4-hydroxybenzoate carboxy-lyase"/>
    <property type="match status" value="1"/>
</dbReference>
<dbReference type="Gene3D" id="1.20.5.570">
    <property type="entry name" value="Single helix bin"/>
    <property type="match status" value="1"/>
</dbReference>
<dbReference type="Gene3D" id="3.40.1670.10">
    <property type="entry name" value="UbiD C-terminal domain-like"/>
    <property type="match status" value="1"/>
</dbReference>
<dbReference type="HAMAP" id="MF_01636">
    <property type="entry name" value="UbiD"/>
    <property type="match status" value="1"/>
</dbReference>
<dbReference type="InterPro" id="IPR002830">
    <property type="entry name" value="UbiD"/>
</dbReference>
<dbReference type="InterPro" id="IPR049381">
    <property type="entry name" value="UbiD-like_C"/>
</dbReference>
<dbReference type="InterPro" id="IPR049383">
    <property type="entry name" value="UbiD-like_N"/>
</dbReference>
<dbReference type="InterPro" id="IPR023677">
    <property type="entry name" value="UbiD_bacteria"/>
</dbReference>
<dbReference type="InterPro" id="IPR048304">
    <property type="entry name" value="UbiD_Rift_dom"/>
</dbReference>
<dbReference type="NCBIfam" id="NF008175">
    <property type="entry name" value="PRK10922.1"/>
    <property type="match status" value="1"/>
</dbReference>
<dbReference type="NCBIfam" id="TIGR00148">
    <property type="entry name" value="UbiD family decarboxylase"/>
    <property type="match status" value="1"/>
</dbReference>
<dbReference type="PANTHER" id="PTHR30108">
    <property type="entry name" value="3-OCTAPRENYL-4-HYDROXYBENZOATE CARBOXY-LYASE-RELATED"/>
    <property type="match status" value="1"/>
</dbReference>
<dbReference type="PANTHER" id="PTHR30108:SF17">
    <property type="entry name" value="FERULIC ACID DECARBOXYLASE 1"/>
    <property type="match status" value="1"/>
</dbReference>
<dbReference type="Pfam" id="PF01977">
    <property type="entry name" value="UbiD"/>
    <property type="match status" value="1"/>
</dbReference>
<dbReference type="Pfam" id="PF20696">
    <property type="entry name" value="UbiD_C"/>
    <property type="match status" value="1"/>
</dbReference>
<dbReference type="Pfam" id="PF20695">
    <property type="entry name" value="UbiD_N"/>
    <property type="match status" value="1"/>
</dbReference>
<dbReference type="SUPFAM" id="SSF50475">
    <property type="entry name" value="FMN-binding split barrel"/>
    <property type="match status" value="1"/>
</dbReference>
<dbReference type="SUPFAM" id="SSF143968">
    <property type="entry name" value="UbiD C-terminal domain-like"/>
    <property type="match status" value="1"/>
</dbReference>
<proteinExistence type="inferred from homology"/>
<name>UBID_PSEPK</name>
<accession>Q88CG8</accession>
<gene>
    <name evidence="1" type="primary">ubiD</name>
    <name type="ordered locus">PP_5213</name>
</gene>
<organism>
    <name type="scientific">Pseudomonas putida (strain ATCC 47054 / DSM 6125 / CFBP 8728 / NCIMB 11950 / KT2440)</name>
    <dbReference type="NCBI Taxonomy" id="160488"/>
    <lineage>
        <taxon>Bacteria</taxon>
        <taxon>Pseudomonadati</taxon>
        <taxon>Pseudomonadota</taxon>
        <taxon>Gammaproteobacteria</taxon>
        <taxon>Pseudomonadales</taxon>
        <taxon>Pseudomonadaceae</taxon>
        <taxon>Pseudomonas</taxon>
    </lineage>
</organism>
<feature type="chain" id="PRO_0000267682" description="3-octaprenyl-4-hydroxybenzoate carboxy-lyase">
    <location>
        <begin position="1"/>
        <end position="488"/>
    </location>
</feature>
<feature type="active site" description="Proton donor" evidence="1">
    <location>
        <position position="287"/>
    </location>
</feature>
<feature type="binding site" evidence="1">
    <location>
        <position position="172"/>
    </location>
    <ligand>
        <name>Mn(2+)</name>
        <dbReference type="ChEBI" id="CHEBI:29035"/>
    </ligand>
</feature>
<feature type="binding site" evidence="1">
    <location>
        <begin position="175"/>
        <end position="177"/>
    </location>
    <ligand>
        <name>prenylated FMN</name>
        <dbReference type="ChEBI" id="CHEBI:87746"/>
    </ligand>
</feature>
<feature type="binding site" evidence="1">
    <location>
        <begin position="189"/>
        <end position="191"/>
    </location>
    <ligand>
        <name>prenylated FMN</name>
        <dbReference type="ChEBI" id="CHEBI:87746"/>
    </ligand>
</feature>
<feature type="binding site" evidence="1">
    <location>
        <begin position="194"/>
        <end position="195"/>
    </location>
    <ligand>
        <name>prenylated FMN</name>
        <dbReference type="ChEBI" id="CHEBI:87746"/>
    </ligand>
</feature>
<feature type="binding site" evidence="1">
    <location>
        <position position="238"/>
    </location>
    <ligand>
        <name>Mn(2+)</name>
        <dbReference type="ChEBI" id="CHEBI:29035"/>
    </ligand>
</feature>
<evidence type="ECO:0000255" key="1">
    <source>
        <dbReference type="HAMAP-Rule" id="MF_01636"/>
    </source>
</evidence>
<evidence type="ECO:0000305" key="2"/>
<comment type="function">
    <text evidence="1">Catalyzes the decarboxylation of 3-octaprenyl-4-hydroxy benzoate to 2-octaprenylphenol, an intermediate step in ubiquinone biosynthesis.</text>
</comment>
<comment type="catalytic activity">
    <reaction evidence="1">
        <text>a 4-hydroxy-3-(all-trans-polyprenyl)benzoate + H(+) = a 2-(all-trans-polyprenyl)phenol + CO2</text>
        <dbReference type="Rhea" id="RHEA:41680"/>
        <dbReference type="Rhea" id="RHEA-COMP:9514"/>
        <dbReference type="Rhea" id="RHEA-COMP:9516"/>
        <dbReference type="ChEBI" id="CHEBI:1269"/>
        <dbReference type="ChEBI" id="CHEBI:15378"/>
        <dbReference type="ChEBI" id="CHEBI:16526"/>
        <dbReference type="ChEBI" id="CHEBI:78396"/>
        <dbReference type="EC" id="4.1.1.98"/>
    </reaction>
</comment>
<comment type="cofactor">
    <cofactor evidence="1">
        <name>prenylated FMN</name>
        <dbReference type="ChEBI" id="CHEBI:87746"/>
    </cofactor>
    <text evidence="1">Binds 1 prenylated FMN per subunit.</text>
</comment>
<comment type="cofactor">
    <cofactor evidence="1">
        <name>Mn(2+)</name>
        <dbReference type="ChEBI" id="CHEBI:29035"/>
    </cofactor>
</comment>
<comment type="pathway">
    <text evidence="1">Cofactor biosynthesis; ubiquinone biosynthesis.</text>
</comment>
<comment type="subunit">
    <text evidence="1">Homohexamer.</text>
</comment>
<comment type="subcellular location">
    <subcellularLocation>
        <location evidence="1">Cell membrane</location>
        <topology evidence="1">Peripheral membrane protein</topology>
    </subcellularLocation>
</comment>
<comment type="similarity">
    <text evidence="1">Belongs to the UbiD family.</text>
</comment>
<comment type="sequence caution" evidence="2">
    <conflict type="erroneous initiation">
        <sequence resource="EMBL-CDS" id="AAN70778"/>
    </conflict>
</comment>